<gene>
    <name type="primary">ptsI</name>
    <name type="ordered locus">HVO_1496</name>
    <name type="ORF">C498_11251</name>
</gene>
<proteinExistence type="evidence at transcript level"/>
<feature type="chain" id="PRO_0000428985" description="Phosphoenolpyruvate-protein phosphotransferase">
    <location>
        <begin position="1"/>
        <end position="565"/>
    </location>
</feature>
<feature type="active site" description="Tele-phosphohistidine intermediate" evidence="1">
    <location>
        <position position="191"/>
    </location>
</feature>
<feature type="active site" description="Proton donor" evidence="1">
    <location>
        <position position="498"/>
    </location>
</feature>
<feature type="binding site" evidence="2">
    <location>
        <position position="289"/>
    </location>
    <ligand>
        <name>phosphoenolpyruvate</name>
        <dbReference type="ChEBI" id="CHEBI:58702"/>
    </ligand>
</feature>
<feature type="binding site" evidence="1">
    <location>
        <position position="325"/>
    </location>
    <ligand>
        <name>phosphoenolpyruvate</name>
        <dbReference type="ChEBI" id="CHEBI:58702"/>
    </ligand>
</feature>
<feature type="binding site" evidence="1">
    <location>
        <position position="427"/>
    </location>
    <ligand>
        <name>Mg(2+)</name>
        <dbReference type="ChEBI" id="CHEBI:18420"/>
    </ligand>
</feature>
<feature type="binding site" evidence="1">
    <location>
        <begin position="450"/>
        <end position="451"/>
    </location>
    <ligand>
        <name>phosphoenolpyruvate</name>
        <dbReference type="ChEBI" id="CHEBI:58702"/>
    </ligand>
</feature>
<feature type="binding site" evidence="1">
    <location>
        <position position="451"/>
    </location>
    <ligand>
        <name>Mg(2+)</name>
        <dbReference type="ChEBI" id="CHEBI:18420"/>
    </ligand>
</feature>
<feature type="binding site" evidence="2">
    <location>
        <position position="461"/>
    </location>
    <ligand>
        <name>phosphoenolpyruvate</name>
        <dbReference type="ChEBI" id="CHEBI:58702"/>
    </ligand>
</feature>
<dbReference type="EC" id="2.7.3.9" evidence="1"/>
<dbReference type="EMBL" id="CP001956">
    <property type="protein sequence ID" value="ADE03888.1"/>
    <property type="molecule type" value="Genomic_DNA"/>
</dbReference>
<dbReference type="EMBL" id="AOHU01000090">
    <property type="protein sequence ID" value="ELY28266.1"/>
    <property type="molecule type" value="Genomic_DNA"/>
</dbReference>
<dbReference type="RefSeq" id="WP_004043439.1">
    <property type="nucleotide sequence ID" value="NC_013967.1"/>
</dbReference>
<dbReference type="SMR" id="D4GYE2"/>
<dbReference type="STRING" id="309800.HVO_1496"/>
<dbReference type="TCDB" id="8.A.7.1.4">
    <property type="family name" value="the phosphotransferase system enzyme i (ei) family"/>
</dbReference>
<dbReference type="PaxDb" id="309800-C498_11251"/>
<dbReference type="EnsemblBacteria" id="ADE03888">
    <property type="protein sequence ID" value="ADE03888"/>
    <property type="gene ID" value="HVO_1496"/>
</dbReference>
<dbReference type="GeneID" id="8926276"/>
<dbReference type="KEGG" id="hvo:HVO_1496"/>
<dbReference type="PATRIC" id="fig|309800.29.peg.2144"/>
<dbReference type="eggNOG" id="arCOG01113">
    <property type="taxonomic scope" value="Archaea"/>
</dbReference>
<dbReference type="HOGENOM" id="CLU_007308_7_0_2"/>
<dbReference type="OrthoDB" id="23397at2157"/>
<dbReference type="Proteomes" id="UP000008243">
    <property type="component" value="Chromosome"/>
</dbReference>
<dbReference type="Proteomes" id="UP000011532">
    <property type="component" value="Unassembled WGS sequence"/>
</dbReference>
<dbReference type="GO" id="GO:0005737">
    <property type="term" value="C:cytoplasm"/>
    <property type="evidence" value="ECO:0007669"/>
    <property type="project" value="UniProtKB-SubCell"/>
</dbReference>
<dbReference type="GO" id="GO:0016301">
    <property type="term" value="F:kinase activity"/>
    <property type="evidence" value="ECO:0007669"/>
    <property type="project" value="UniProtKB-KW"/>
</dbReference>
<dbReference type="GO" id="GO:0046872">
    <property type="term" value="F:metal ion binding"/>
    <property type="evidence" value="ECO:0007669"/>
    <property type="project" value="UniProtKB-KW"/>
</dbReference>
<dbReference type="GO" id="GO:0008965">
    <property type="term" value="F:phosphoenolpyruvate-protein phosphotransferase activity"/>
    <property type="evidence" value="ECO:0007669"/>
    <property type="project" value="UniProtKB-EC"/>
</dbReference>
<dbReference type="GO" id="GO:0009401">
    <property type="term" value="P:phosphoenolpyruvate-dependent sugar phosphotransferase system"/>
    <property type="evidence" value="ECO:0007669"/>
    <property type="project" value="UniProtKB-KW"/>
</dbReference>
<dbReference type="Gene3D" id="3.20.20.60">
    <property type="entry name" value="Phosphoenolpyruvate-binding domains"/>
    <property type="match status" value="1"/>
</dbReference>
<dbReference type="Gene3D" id="3.50.30.10">
    <property type="entry name" value="Phosphohistidine domain"/>
    <property type="match status" value="1"/>
</dbReference>
<dbReference type="Gene3D" id="1.10.274.10">
    <property type="entry name" value="PtsI, HPr-binding domain"/>
    <property type="match status" value="1"/>
</dbReference>
<dbReference type="InterPro" id="IPR008279">
    <property type="entry name" value="PEP-util_enz_mobile_dom"/>
</dbReference>
<dbReference type="InterPro" id="IPR050499">
    <property type="entry name" value="PEP-utilizing_PTS_enzyme"/>
</dbReference>
<dbReference type="InterPro" id="IPR000121">
    <property type="entry name" value="PEP_util_C"/>
</dbReference>
<dbReference type="InterPro" id="IPR023151">
    <property type="entry name" value="PEP_util_CS"/>
</dbReference>
<dbReference type="InterPro" id="IPR036637">
    <property type="entry name" value="Phosphohistidine_dom_sf"/>
</dbReference>
<dbReference type="InterPro" id="IPR024692">
    <property type="entry name" value="PTS_EI"/>
</dbReference>
<dbReference type="InterPro" id="IPR006318">
    <property type="entry name" value="PTS_EI-like"/>
</dbReference>
<dbReference type="InterPro" id="IPR008731">
    <property type="entry name" value="PTS_EIN"/>
</dbReference>
<dbReference type="InterPro" id="IPR036618">
    <property type="entry name" value="PtsI_HPr-bd_sf"/>
</dbReference>
<dbReference type="InterPro" id="IPR015813">
    <property type="entry name" value="Pyrv/PenolPyrv_kinase-like_dom"/>
</dbReference>
<dbReference type="InterPro" id="IPR040442">
    <property type="entry name" value="Pyrv_kinase-like_dom_sf"/>
</dbReference>
<dbReference type="NCBIfam" id="TIGR01417">
    <property type="entry name" value="PTS_I_fam"/>
    <property type="match status" value="1"/>
</dbReference>
<dbReference type="PANTHER" id="PTHR46244">
    <property type="entry name" value="PHOSPHOENOLPYRUVATE-PROTEIN PHOSPHOTRANSFERASE"/>
    <property type="match status" value="1"/>
</dbReference>
<dbReference type="PANTHER" id="PTHR46244:SF3">
    <property type="entry name" value="PHOSPHOENOLPYRUVATE-PROTEIN PHOSPHOTRANSFERASE"/>
    <property type="match status" value="1"/>
</dbReference>
<dbReference type="Pfam" id="PF05524">
    <property type="entry name" value="PEP-utilisers_N"/>
    <property type="match status" value="1"/>
</dbReference>
<dbReference type="Pfam" id="PF00391">
    <property type="entry name" value="PEP-utilizers"/>
    <property type="match status" value="1"/>
</dbReference>
<dbReference type="Pfam" id="PF02896">
    <property type="entry name" value="PEP-utilizers_C"/>
    <property type="match status" value="1"/>
</dbReference>
<dbReference type="PIRSF" id="PIRSF000732">
    <property type="entry name" value="PTS_enzyme_I"/>
    <property type="match status" value="1"/>
</dbReference>
<dbReference type="PRINTS" id="PR01736">
    <property type="entry name" value="PHPHTRNFRASE"/>
</dbReference>
<dbReference type="SUPFAM" id="SSF47831">
    <property type="entry name" value="Enzyme I of the PEP:sugar phosphotransferase system HPr-binding (sub)domain"/>
    <property type="match status" value="1"/>
</dbReference>
<dbReference type="SUPFAM" id="SSF51621">
    <property type="entry name" value="Phosphoenolpyruvate/pyruvate domain"/>
    <property type="match status" value="1"/>
</dbReference>
<dbReference type="SUPFAM" id="SSF52009">
    <property type="entry name" value="Phosphohistidine domain"/>
    <property type="match status" value="1"/>
</dbReference>
<dbReference type="PROSITE" id="PS00742">
    <property type="entry name" value="PEP_ENZYMES_2"/>
    <property type="match status" value="1"/>
</dbReference>
<keyword id="KW-0963">Cytoplasm</keyword>
<keyword id="KW-0418">Kinase</keyword>
<keyword id="KW-0460">Magnesium</keyword>
<keyword id="KW-0479">Metal-binding</keyword>
<keyword id="KW-0598">Phosphotransferase system</keyword>
<keyword id="KW-1185">Reference proteome</keyword>
<keyword id="KW-0762">Sugar transport</keyword>
<keyword id="KW-0808">Transferase</keyword>
<keyword id="KW-0813">Transport</keyword>
<protein>
    <recommendedName>
        <fullName evidence="1">Phosphoenolpyruvate-protein phosphotransferase</fullName>
        <ecNumber evidence="1">2.7.3.9</ecNumber>
    </recommendedName>
    <alternativeName>
        <fullName evidence="1">Phosphotransferase system, enzyme I</fullName>
    </alternativeName>
</protein>
<comment type="function">
    <text evidence="1">General (non sugar-specific) component of the phosphoenolpyruvate-dependent sugar phosphotransferase system (sugar PTS). This major carbohydrate active-transport system catalyzes the phosphorylation of incoming sugar substrates concomitantly with their translocation across the cell membrane. Enzyme I transfers the phosphoryl group from phosphoenolpyruvate (PEP) to the phosphoryl carrier protein (HPr).</text>
</comment>
<comment type="catalytic activity">
    <reaction evidence="1">
        <text>L-histidyl-[protein] + phosphoenolpyruvate = N(pros)-phospho-L-histidyl-[protein] + pyruvate</text>
        <dbReference type="Rhea" id="RHEA:23880"/>
        <dbReference type="Rhea" id="RHEA-COMP:9745"/>
        <dbReference type="Rhea" id="RHEA-COMP:9746"/>
        <dbReference type="ChEBI" id="CHEBI:15361"/>
        <dbReference type="ChEBI" id="CHEBI:29979"/>
        <dbReference type="ChEBI" id="CHEBI:58702"/>
        <dbReference type="ChEBI" id="CHEBI:64837"/>
        <dbReference type="EC" id="2.7.3.9"/>
    </reaction>
</comment>
<comment type="cofactor">
    <cofactor evidence="1">
        <name>Mg(2+)</name>
        <dbReference type="ChEBI" id="CHEBI:18420"/>
    </cofactor>
</comment>
<comment type="subunit">
    <text evidence="1">Homodimer.</text>
</comment>
<comment type="subcellular location">
    <subcellularLocation>
        <location evidence="4">Cytoplasm</location>
    </subcellularLocation>
</comment>
<comment type="induction">
    <text evidence="3">Expression is highly up-regulated in presence of fructose.</text>
</comment>
<comment type="domain">
    <text evidence="1">The N-terminal domain contains the HPr binding site, the central domain the pyrophosphate/phosphate carrier histidine, and the C-terminal domain the pyruvate binding site.</text>
</comment>
<comment type="miscellaneous">
    <text evidence="1">The reaction takes place in three steps, mediated by a phosphocarrier histidine residue located on the surface of the central domain. The two first partial reactions are catalyzed at an active site located on the N-terminal domain, and the third partial reaction is catalyzed at an active site located on the C-terminal domain. For catalytic turnover, the central domain swivels from the concave surface of the N-terminal domain to that of the C-terminal domain.</text>
</comment>
<comment type="similarity">
    <text evidence="4">Belongs to the PEP-utilizing enzyme family.</text>
</comment>
<sequence length="565" mass="60325">MTERTLSGIGVTPLSGVGTVVWYRPDADLPEPPAPVDVDAEAELARFEDARAAAEDELEAERERTAERVGEEEAAVFDAHVQFLNDPQITDGVSDAIESGLPAEHAVQETFTEFVEQFENMGGRMGERADDLRDVRDRLVRVLSDGERVDLSSLPEGSVVVAERLTPSDTAQLDPERVAGFVTVTGGRTSHAAIFARSLALPAIVGVGEELQSVEDGTEVVVDGESGDLVVDPSDERKEAAAAAADVDIRHEAVETADGVDIEVAANIGTLADLGPAVDRGADGVGLFRTEFLFLDRESPPDEDEQYEAYVEALESFDGGRVVVRTLDIGGDKPVPYLDLPDEENPFLGERGIRRSLGPDADLFETQVRALLRAAASADGANLSVMLPLVSTVEELRAGRERFESVAADLDAEGVANELPEFGIMVETPAAAFMADQFAPHVDFFSIGTNDLAQYVMAAERGNERVSELGDYRQPAVLRAIDATVSAAEGEDCWVGMCGEMAGDPDLTELLVGLGLDELSMSAVTVPQVKAAVAETDTADARDLAERVLQADTKAEVAEILTLDQ</sequence>
<organism>
    <name type="scientific">Haloferax volcanii (strain ATCC 29605 / DSM 3757 / JCM 8879 / NBRC 14742 / NCIMB 2012 / VKM B-1768 / DS2)</name>
    <name type="common">Halobacterium volcanii</name>
    <dbReference type="NCBI Taxonomy" id="309800"/>
    <lineage>
        <taxon>Archaea</taxon>
        <taxon>Methanobacteriati</taxon>
        <taxon>Methanobacteriota</taxon>
        <taxon>Stenosarchaea group</taxon>
        <taxon>Halobacteria</taxon>
        <taxon>Halobacteriales</taxon>
        <taxon>Haloferacaceae</taxon>
        <taxon>Haloferax</taxon>
    </lineage>
</organism>
<reference key="1">
    <citation type="journal article" date="2010" name="PLoS ONE">
        <title>The complete genome sequence of Haloferax volcanii DS2, a model archaeon.</title>
        <authorList>
            <person name="Hartman A.L."/>
            <person name="Norais C."/>
            <person name="Badger J.H."/>
            <person name="Delmas S."/>
            <person name="Haldenby S."/>
            <person name="Madupu R."/>
            <person name="Robinson J."/>
            <person name="Khouri H."/>
            <person name="Ren Q."/>
            <person name="Lowe T.M."/>
            <person name="Maupin-Furlow J."/>
            <person name="Pohlschroder M."/>
            <person name="Daniels C."/>
            <person name="Pfeiffer F."/>
            <person name="Allers T."/>
            <person name="Eisen J.A."/>
        </authorList>
    </citation>
    <scope>NUCLEOTIDE SEQUENCE [LARGE SCALE GENOMIC DNA]</scope>
    <source>
        <strain>ATCC 29605 / DSM 3757 / JCM 8879 / NBRC 14742 / NCIMB 2012 / VKM B-1768 / DS2</strain>
    </source>
</reference>
<reference key="2">
    <citation type="journal article" date="2014" name="PLoS Genet.">
        <title>Phylogenetically driven sequencing of extremely halophilic archaea reveals strategies for static and dynamic osmo-response.</title>
        <authorList>
            <person name="Becker E.A."/>
            <person name="Seitzer P.M."/>
            <person name="Tritt A."/>
            <person name="Larsen D."/>
            <person name="Krusor M."/>
            <person name="Yao A.I."/>
            <person name="Wu D."/>
            <person name="Madern D."/>
            <person name="Eisen J.A."/>
            <person name="Darling A.E."/>
            <person name="Facciotti M.T."/>
        </authorList>
    </citation>
    <scope>NUCLEOTIDE SEQUENCE [LARGE SCALE GENOMIC DNA]</scope>
    <source>
        <strain>ATCC 29605 / DSM 3757 / JCM 8879 / NBRC 14742 / NCIMB 2012 / VKM B-1768 / DS2</strain>
    </source>
</reference>
<reference key="3">
    <citation type="journal article" date="2012" name="J. Bacteriol.">
        <title>Fructose degradation in the haloarchaeon Haloferax volcanii involves a bacterial type phosphoenolpyruvate-dependent phosphotransferase system, fructose-1-phosphate kinase, and class II fructose-1,6-bisphosphate aldolase.</title>
        <authorList>
            <person name="Pickl A."/>
            <person name="Johnsen U."/>
            <person name="Schoenheit P."/>
        </authorList>
    </citation>
    <scope>IDENTIFICATION</scope>
    <scope>FUNCTION</scope>
    <scope>INDUCTION</scope>
    <source>
        <strain>DS2 / DS70</strain>
    </source>
</reference>
<accession>D4GYE2</accession>
<name>PT1_HALVD</name>
<evidence type="ECO:0000250" key="1">
    <source>
        <dbReference type="UniProtKB" id="P08839"/>
    </source>
</evidence>
<evidence type="ECO:0000250" key="2">
    <source>
        <dbReference type="UniProtKB" id="P23533"/>
    </source>
</evidence>
<evidence type="ECO:0000269" key="3">
    <source>
    </source>
</evidence>
<evidence type="ECO:0000305" key="4"/>